<dbReference type="EMBL" id="BA000033">
    <property type="protein sequence ID" value="BAB94356.1"/>
    <property type="molecule type" value="Genomic_DNA"/>
</dbReference>
<dbReference type="RefSeq" id="WP_001288302.1">
    <property type="nucleotide sequence ID" value="NC_003923.1"/>
</dbReference>
<dbReference type="SMR" id="P0A097"/>
<dbReference type="KEGG" id="sam:MW0491"/>
<dbReference type="HOGENOM" id="CLU_067287_1_1_9"/>
<dbReference type="GO" id="GO:0005829">
    <property type="term" value="C:cytosol"/>
    <property type="evidence" value="ECO:0007669"/>
    <property type="project" value="TreeGrafter"/>
</dbReference>
<dbReference type="GO" id="GO:0006353">
    <property type="term" value="P:DNA-templated transcription termination"/>
    <property type="evidence" value="ECO:0007669"/>
    <property type="project" value="UniProtKB-UniRule"/>
</dbReference>
<dbReference type="GO" id="GO:0032784">
    <property type="term" value="P:regulation of DNA-templated transcription elongation"/>
    <property type="evidence" value="ECO:0007669"/>
    <property type="project" value="InterPro"/>
</dbReference>
<dbReference type="GO" id="GO:0031564">
    <property type="term" value="P:transcription antitermination"/>
    <property type="evidence" value="ECO:0007669"/>
    <property type="project" value="UniProtKB-UniRule"/>
</dbReference>
<dbReference type="GO" id="GO:0140673">
    <property type="term" value="P:transcription elongation-coupled chromatin remodeling"/>
    <property type="evidence" value="ECO:0007669"/>
    <property type="project" value="InterPro"/>
</dbReference>
<dbReference type="CDD" id="cd06091">
    <property type="entry name" value="KOW_NusG"/>
    <property type="match status" value="1"/>
</dbReference>
<dbReference type="CDD" id="cd09891">
    <property type="entry name" value="NGN_Bact_1"/>
    <property type="match status" value="1"/>
</dbReference>
<dbReference type="FunFam" id="2.30.30.30:FF:000002">
    <property type="entry name" value="Transcription termination/antitermination factor NusG"/>
    <property type="match status" value="1"/>
</dbReference>
<dbReference type="FunFam" id="3.30.70.940:FF:000002">
    <property type="entry name" value="Transcription termination/antitermination protein NusG"/>
    <property type="match status" value="1"/>
</dbReference>
<dbReference type="Gene3D" id="2.30.30.30">
    <property type="match status" value="1"/>
</dbReference>
<dbReference type="Gene3D" id="3.30.70.940">
    <property type="entry name" value="NusG, N-terminal domain"/>
    <property type="match status" value="1"/>
</dbReference>
<dbReference type="HAMAP" id="MF_00948">
    <property type="entry name" value="NusG"/>
    <property type="match status" value="1"/>
</dbReference>
<dbReference type="InterPro" id="IPR005824">
    <property type="entry name" value="KOW"/>
</dbReference>
<dbReference type="InterPro" id="IPR047050">
    <property type="entry name" value="NGN"/>
</dbReference>
<dbReference type="InterPro" id="IPR006645">
    <property type="entry name" value="NGN-like_dom"/>
</dbReference>
<dbReference type="InterPro" id="IPR036735">
    <property type="entry name" value="NGN_dom_sf"/>
</dbReference>
<dbReference type="InterPro" id="IPR043425">
    <property type="entry name" value="NusG-like"/>
</dbReference>
<dbReference type="InterPro" id="IPR014722">
    <property type="entry name" value="Rib_uL2_dom2"/>
</dbReference>
<dbReference type="InterPro" id="IPR001062">
    <property type="entry name" value="Transcrpt_antiterm_NusG"/>
</dbReference>
<dbReference type="InterPro" id="IPR015869">
    <property type="entry name" value="Transcrpt_antiterm_NusG_bac_CS"/>
</dbReference>
<dbReference type="InterPro" id="IPR008991">
    <property type="entry name" value="Translation_prot_SH3-like_sf"/>
</dbReference>
<dbReference type="NCBIfam" id="TIGR00922">
    <property type="entry name" value="nusG"/>
    <property type="match status" value="1"/>
</dbReference>
<dbReference type="PANTHER" id="PTHR30265">
    <property type="entry name" value="RHO-INTERACTING TRANSCRIPTION TERMINATION FACTOR NUSG"/>
    <property type="match status" value="1"/>
</dbReference>
<dbReference type="PANTHER" id="PTHR30265:SF2">
    <property type="entry name" value="TRANSCRIPTION TERMINATION_ANTITERMINATION PROTEIN NUSG"/>
    <property type="match status" value="1"/>
</dbReference>
<dbReference type="Pfam" id="PF00467">
    <property type="entry name" value="KOW"/>
    <property type="match status" value="1"/>
</dbReference>
<dbReference type="Pfam" id="PF02357">
    <property type="entry name" value="NusG"/>
    <property type="match status" value="1"/>
</dbReference>
<dbReference type="PRINTS" id="PR00338">
    <property type="entry name" value="NUSGTNSCPFCT"/>
</dbReference>
<dbReference type="SMART" id="SM00739">
    <property type="entry name" value="KOW"/>
    <property type="match status" value="1"/>
</dbReference>
<dbReference type="SMART" id="SM00738">
    <property type="entry name" value="NGN"/>
    <property type="match status" value="1"/>
</dbReference>
<dbReference type="SUPFAM" id="SSF82679">
    <property type="entry name" value="N-utilization substance G protein NusG, N-terminal domain"/>
    <property type="match status" value="1"/>
</dbReference>
<dbReference type="SUPFAM" id="SSF50104">
    <property type="entry name" value="Translation proteins SH3-like domain"/>
    <property type="match status" value="1"/>
</dbReference>
<dbReference type="PROSITE" id="PS01014">
    <property type="entry name" value="NUSG"/>
    <property type="match status" value="1"/>
</dbReference>
<proteinExistence type="inferred from homology"/>
<organism>
    <name type="scientific">Staphylococcus aureus (strain MW2)</name>
    <dbReference type="NCBI Taxonomy" id="196620"/>
    <lineage>
        <taxon>Bacteria</taxon>
        <taxon>Bacillati</taxon>
        <taxon>Bacillota</taxon>
        <taxon>Bacilli</taxon>
        <taxon>Bacillales</taxon>
        <taxon>Staphylococcaceae</taxon>
        <taxon>Staphylococcus</taxon>
    </lineage>
</organism>
<gene>
    <name evidence="1" type="primary">nusG</name>
    <name type="ordered locus">MW0491</name>
</gene>
<reference key="1">
    <citation type="journal article" date="2002" name="Lancet">
        <title>Genome and virulence determinants of high virulence community-acquired MRSA.</title>
        <authorList>
            <person name="Baba T."/>
            <person name="Takeuchi F."/>
            <person name="Kuroda M."/>
            <person name="Yuzawa H."/>
            <person name="Aoki K."/>
            <person name="Oguchi A."/>
            <person name="Nagai Y."/>
            <person name="Iwama N."/>
            <person name="Asano K."/>
            <person name="Naimi T."/>
            <person name="Kuroda H."/>
            <person name="Cui L."/>
            <person name="Yamamoto K."/>
            <person name="Hiramatsu K."/>
        </authorList>
    </citation>
    <scope>NUCLEOTIDE SEQUENCE [LARGE SCALE GENOMIC DNA]</scope>
    <source>
        <strain>MW2</strain>
    </source>
</reference>
<keyword id="KW-0804">Transcription</keyword>
<keyword id="KW-0889">Transcription antitermination</keyword>
<keyword id="KW-0805">Transcription regulation</keyword>
<keyword id="KW-0806">Transcription termination</keyword>
<comment type="function">
    <text evidence="1">Participates in transcription elongation, termination and antitermination.</text>
</comment>
<comment type="similarity">
    <text evidence="1">Belongs to the NusG family.</text>
</comment>
<feature type="chain" id="PRO_0000113952" description="Transcription termination/antitermination protein NusG">
    <location>
        <begin position="1"/>
        <end position="182"/>
    </location>
</feature>
<feature type="domain" description="KOW" evidence="1">
    <location>
        <begin position="131"/>
        <end position="163"/>
    </location>
</feature>
<evidence type="ECO:0000255" key="1">
    <source>
        <dbReference type="HAMAP-Rule" id="MF_00948"/>
    </source>
</evidence>
<sequence length="182" mass="20664">MSEEVGAKRWYAVHTYSGYENKVKKNLEKRVESMNMTEQIFRVVIPEEEETQVKDGKAKTTVKKTFPGYVLVELIMTDESWYVVRNTPGVTGFVGSAGAGSKPNPLLPEEVRFILKQMGLKEKTIDVELEVGEQVRIKSGPFANQVGEVQEIETDKFKLTVLVDMFGRETPVEVEFDQIEKL</sequence>
<name>NUSG_STAAW</name>
<protein>
    <recommendedName>
        <fullName evidence="1">Transcription termination/antitermination protein NusG</fullName>
    </recommendedName>
</protein>
<accession>P0A097</accession>
<accession>O08386</accession>